<reference key="1">
    <citation type="journal article" date="2004" name="Proc. Natl. Acad. Sci. U.S.A.">
        <title>The louse-borne human pathogen Bartonella quintana is a genomic derivative of the zoonotic agent Bartonella henselae.</title>
        <authorList>
            <person name="Alsmark U.C.M."/>
            <person name="Frank A.C."/>
            <person name="Karlberg E.O."/>
            <person name="Legault B.-A."/>
            <person name="Ardell D.H."/>
            <person name="Canbaeck B."/>
            <person name="Eriksson A.-S."/>
            <person name="Naeslund A.K."/>
            <person name="Handley S.A."/>
            <person name="Huvet M."/>
            <person name="La Scola B."/>
            <person name="Holmberg M."/>
            <person name="Andersson S.G.E."/>
        </authorList>
    </citation>
    <scope>NUCLEOTIDE SEQUENCE [LARGE SCALE GENOMIC DNA]</scope>
    <source>
        <strain>Toulouse</strain>
    </source>
</reference>
<sequence length="536" mass="57136">MVKAVSSSKGAAKVEQKKSAARSGVKKNASKSQASLQDTSSPLKTSSKNAHAKKDVQAKGAVGEIKQVIGAVVDVQFEGALPNILNALETENLGNRLVLEVAQHLGENTVRTIAMDTTDGLTRGQKVFDTETQICVPVGEATLGRIMNVIGEPVDNVGPIATTKTRSIHQKAPEYVDQSTASEILVTGIKVVDLLAPYSKGGKVGLFGGAGVGKTVLIMELINNIAKAHGGYSVFAGVGERTREGNDLYYEMIESRVNVNPKDNNGSTKGSKCALVYGQMNEPPGARARVALSGLTIAESFRDEGQDVLFFVDNIFRFTQAGAEVSALLGRIPSAVGYQPTLATDMGALQERITSTKTGSITSVQAIYVPADDLTDPAPATSFAHLDATTVLSRSIAEKGIYPAVDPLDSFSRMLDPLVVGEEHYTVACQVQTILQRYRSLQDIIAILGMDELSEEDKLLVGRARKIERFLSQPFHVAETFTGSPGKLVPLEETIKGFKGLCAGDYDDLPEAAFYMVGSIDEALEKGKRLIAEAAS</sequence>
<gene>
    <name evidence="1" type="primary">atpD</name>
    <name type="ordered locus">BQ12230</name>
</gene>
<organism>
    <name type="scientific">Bartonella quintana (strain Toulouse)</name>
    <name type="common">Rochalimaea quintana</name>
    <dbReference type="NCBI Taxonomy" id="283165"/>
    <lineage>
        <taxon>Bacteria</taxon>
        <taxon>Pseudomonadati</taxon>
        <taxon>Pseudomonadota</taxon>
        <taxon>Alphaproteobacteria</taxon>
        <taxon>Hyphomicrobiales</taxon>
        <taxon>Bartonellaceae</taxon>
        <taxon>Bartonella</taxon>
    </lineage>
</organism>
<accession>Q6FYM3</accession>
<protein>
    <recommendedName>
        <fullName evidence="1">ATP synthase subunit beta</fullName>
        <ecNumber evidence="1">7.1.2.2</ecNumber>
    </recommendedName>
    <alternativeName>
        <fullName evidence="1">ATP synthase F1 sector subunit beta</fullName>
    </alternativeName>
    <alternativeName>
        <fullName evidence="1">F-ATPase subunit beta</fullName>
    </alternativeName>
</protein>
<evidence type="ECO:0000255" key="1">
    <source>
        <dbReference type="HAMAP-Rule" id="MF_01347"/>
    </source>
</evidence>
<evidence type="ECO:0000256" key="2">
    <source>
        <dbReference type="SAM" id="MobiDB-lite"/>
    </source>
</evidence>
<name>ATPB_BARQU</name>
<proteinExistence type="inferred from homology"/>
<comment type="function">
    <text evidence="1">Produces ATP from ADP in the presence of a proton gradient across the membrane. The catalytic sites are hosted primarily by the beta subunits.</text>
</comment>
<comment type="catalytic activity">
    <reaction evidence="1">
        <text>ATP + H2O + 4 H(+)(in) = ADP + phosphate + 5 H(+)(out)</text>
        <dbReference type="Rhea" id="RHEA:57720"/>
        <dbReference type="ChEBI" id="CHEBI:15377"/>
        <dbReference type="ChEBI" id="CHEBI:15378"/>
        <dbReference type="ChEBI" id="CHEBI:30616"/>
        <dbReference type="ChEBI" id="CHEBI:43474"/>
        <dbReference type="ChEBI" id="CHEBI:456216"/>
        <dbReference type="EC" id="7.1.2.2"/>
    </reaction>
</comment>
<comment type="subunit">
    <text evidence="1">F-type ATPases have 2 components, CF(1) - the catalytic core - and CF(0) - the membrane proton channel. CF(1) has five subunits: alpha(3), beta(3), gamma(1), delta(1), epsilon(1). CF(0) has three main subunits: a(1), b(2) and c(9-12). The alpha and beta chains form an alternating ring which encloses part of the gamma chain. CF(1) is attached to CF(0) by a central stalk formed by the gamma and epsilon chains, while a peripheral stalk is formed by the delta and b chains.</text>
</comment>
<comment type="subcellular location">
    <subcellularLocation>
        <location evidence="1">Cell inner membrane</location>
        <topology evidence="1">Peripheral membrane protein</topology>
    </subcellularLocation>
</comment>
<comment type="similarity">
    <text evidence="1">Belongs to the ATPase alpha/beta chains family.</text>
</comment>
<dbReference type="EC" id="7.1.2.2" evidence="1"/>
<dbReference type="EMBL" id="BX897700">
    <property type="protein sequence ID" value="CAF26682.1"/>
    <property type="molecule type" value="Genomic_DNA"/>
</dbReference>
<dbReference type="RefSeq" id="WP_011179852.1">
    <property type="nucleotide sequence ID" value="NC_005955.1"/>
</dbReference>
<dbReference type="SMR" id="Q6FYM3"/>
<dbReference type="KEGG" id="bqu:BQ12230"/>
<dbReference type="eggNOG" id="COG0055">
    <property type="taxonomic scope" value="Bacteria"/>
</dbReference>
<dbReference type="HOGENOM" id="CLU_022398_0_2_5"/>
<dbReference type="OrthoDB" id="9801639at2"/>
<dbReference type="Proteomes" id="UP000000597">
    <property type="component" value="Chromosome"/>
</dbReference>
<dbReference type="GO" id="GO:0005886">
    <property type="term" value="C:plasma membrane"/>
    <property type="evidence" value="ECO:0007669"/>
    <property type="project" value="UniProtKB-SubCell"/>
</dbReference>
<dbReference type="GO" id="GO:0045259">
    <property type="term" value="C:proton-transporting ATP synthase complex"/>
    <property type="evidence" value="ECO:0007669"/>
    <property type="project" value="UniProtKB-KW"/>
</dbReference>
<dbReference type="GO" id="GO:0005524">
    <property type="term" value="F:ATP binding"/>
    <property type="evidence" value="ECO:0007669"/>
    <property type="project" value="UniProtKB-UniRule"/>
</dbReference>
<dbReference type="GO" id="GO:0016887">
    <property type="term" value="F:ATP hydrolysis activity"/>
    <property type="evidence" value="ECO:0007669"/>
    <property type="project" value="InterPro"/>
</dbReference>
<dbReference type="GO" id="GO:0046933">
    <property type="term" value="F:proton-transporting ATP synthase activity, rotational mechanism"/>
    <property type="evidence" value="ECO:0007669"/>
    <property type="project" value="UniProtKB-UniRule"/>
</dbReference>
<dbReference type="CDD" id="cd18110">
    <property type="entry name" value="ATP-synt_F1_beta_C"/>
    <property type="match status" value="1"/>
</dbReference>
<dbReference type="CDD" id="cd18115">
    <property type="entry name" value="ATP-synt_F1_beta_N"/>
    <property type="match status" value="1"/>
</dbReference>
<dbReference type="CDD" id="cd01133">
    <property type="entry name" value="F1-ATPase_beta_CD"/>
    <property type="match status" value="1"/>
</dbReference>
<dbReference type="FunFam" id="1.10.1140.10:FF:000001">
    <property type="entry name" value="ATP synthase subunit beta"/>
    <property type="match status" value="1"/>
</dbReference>
<dbReference type="FunFam" id="3.40.50.300:FF:000026">
    <property type="entry name" value="ATP synthase subunit beta"/>
    <property type="match status" value="1"/>
</dbReference>
<dbReference type="Gene3D" id="2.40.10.170">
    <property type="match status" value="1"/>
</dbReference>
<dbReference type="Gene3D" id="1.10.1140.10">
    <property type="entry name" value="Bovine Mitochondrial F1-atpase, Atp Synthase Beta Chain, Chain D, domain 3"/>
    <property type="match status" value="1"/>
</dbReference>
<dbReference type="Gene3D" id="3.40.50.300">
    <property type="entry name" value="P-loop containing nucleotide triphosphate hydrolases"/>
    <property type="match status" value="1"/>
</dbReference>
<dbReference type="HAMAP" id="MF_01347">
    <property type="entry name" value="ATP_synth_beta_bact"/>
    <property type="match status" value="1"/>
</dbReference>
<dbReference type="InterPro" id="IPR003593">
    <property type="entry name" value="AAA+_ATPase"/>
</dbReference>
<dbReference type="InterPro" id="IPR055190">
    <property type="entry name" value="ATP-synt_VA_C"/>
</dbReference>
<dbReference type="InterPro" id="IPR005722">
    <property type="entry name" value="ATP_synth_F1_bsu"/>
</dbReference>
<dbReference type="InterPro" id="IPR020003">
    <property type="entry name" value="ATPase_a/bsu_AS"/>
</dbReference>
<dbReference type="InterPro" id="IPR050053">
    <property type="entry name" value="ATPase_alpha/beta_chains"/>
</dbReference>
<dbReference type="InterPro" id="IPR004100">
    <property type="entry name" value="ATPase_F1/V1/A1_a/bsu_N"/>
</dbReference>
<dbReference type="InterPro" id="IPR036121">
    <property type="entry name" value="ATPase_F1/V1/A1_a/bsu_N_sf"/>
</dbReference>
<dbReference type="InterPro" id="IPR000194">
    <property type="entry name" value="ATPase_F1/V1/A1_a/bsu_nucl-bd"/>
</dbReference>
<dbReference type="InterPro" id="IPR024034">
    <property type="entry name" value="ATPase_F1/V1_b/a_C"/>
</dbReference>
<dbReference type="InterPro" id="IPR027417">
    <property type="entry name" value="P-loop_NTPase"/>
</dbReference>
<dbReference type="NCBIfam" id="TIGR01039">
    <property type="entry name" value="atpD"/>
    <property type="match status" value="1"/>
</dbReference>
<dbReference type="PANTHER" id="PTHR15184">
    <property type="entry name" value="ATP SYNTHASE"/>
    <property type="match status" value="1"/>
</dbReference>
<dbReference type="PANTHER" id="PTHR15184:SF71">
    <property type="entry name" value="ATP SYNTHASE SUBUNIT BETA, MITOCHONDRIAL"/>
    <property type="match status" value="1"/>
</dbReference>
<dbReference type="Pfam" id="PF00006">
    <property type="entry name" value="ATP-synt_ab"/>
    <property type="match status" value="1"/>
</dbReference>
<dbReference type="Pfam" id="PF02874">
    <property type="entry name" value="ATP-synt_ab_N"/>
    <property type="match status" value="1"/>
</dbReference>
<dbReference type="Pfam" id="PF22919">
    <property type="entry name" value="ATP-synt_VA_C"/>
    <property type="match status" value="1"/>
</dbReference>
<dbReference type="PIRSF" id="PIRSF039072">
    <property type="entry name" value="ATPase_subunit_beta"/>
    <property type="match status" value="1"/>
</dbReference>
<dbReference type="SMART" id="SM00382">
    <property type="entry name" value="AAA"/>
    <property type="match status" value="1"/>
</dbReference>
<dbReference type="SUPFAM" id="SSF47917">
    <property type="entry name" value="C-terminal domain of alpha and beta subunits of F1 ATP synthase"/>
    <property type="match status" value="1"/>
</dbReference>
<dbReference type="SUPFAM" id="SSF50615">
    <property type="entry name" value="N-terminal domain of alpha and beta subunits of F1 ATP synthase"/>
    <property type="match status" value="1"/>
</dbReference>
<dbReference type="SUPFAM" id="SSF52540">
    <property type="entry name" value="P-loop containing nucleoside triphosphate hydrolases"/>
    <property type="match status" value="1"/>
</dbReference>
<dbReference type="PROSITE" id="PS00152">
    <property type="entry name" value="ATPASE_ALPHA_BETA"/>
    <property type="match status" value="1"/>
</dbReference>
<feature type="chain" id="PRO_0000254215" description="ATP synthase subunit beta">
    <location>
        <begin position="1"/>
        <end position="536"/>
    </location>
</feature>
<feature type="region of interest" description="Disordered" evidence="2">
    <location>
        <begin position="1"/>
        <end position="57"/>
    </location>
</feature>
<feature type="compositionally biased region" description="Polar residues" evidence="2">
    <location>
        <begin position="30"/>
        <end position="49"/>
    </location>
</feature>
<feature type="binding site" evidence="1">
    <location>
        <begin position="208"/>
        <end position="215"/>
    </location>
    <ligand>
        <name>ATP</name>
        <dbReference type="ChEBI" id="CHEBI:30616"/>
    </ligand>
</feature>
<keyword id="KW-0066">ATP synthesis</keyword>
<keyword id="KW-0067">ATP-binding</keyword>
<keyword id="KW-0997">Cell inner membrane</keyword>
<keyword id="KW-1003">Cell membrane</keyword>
<keyword id="KW-0139">CF(1)</keyword>
<keyword id="KW-0375">Hydrogen ion transport</keyword>
<keyword id="KW-0406">Ion transport</keyword>
<keyword id="KW-0472">Membrane</keyword>
<keyword id="KW-0547">Nucleotide-binding</keyword>
<keyword id="KW-1278">Translocase</keyword>
<keyword id="KW-0813">Transport</keyword>